<keyword id="KW-0378">Hydrolase</keyword>
<keyword id="KW-0408">Iron</keyword>
<keyword id="KW-0479">Metal-binding</keyword>
<keyword id="KW-0648">Protein biosynthesis</keyword>
<comment type="function">
    <text evidence="1">Removes the formyl group from the N-terminal Met of newly synthesized proteins. Requires at least a dipeptide for an efficient rate of reaction. N-terminal L-methionine is a prerequisite for activity but the enzyme has broad specificity at other positions.</text>
</comment>
<comment type="catalytic activity">
    <reaction evidence="1">
        <text>N-terminal N-formyl-L-methionyl-[peptide] + H2O = N-terminal L-methionyl-[peptide] + formate</text>
        <dbReference type="Rhea" id="RHEA:24420"/>
        <dbReference type="Rhea" id="RHEA-COMP:10639"/>
        <dbReference type="Rhea" id="RHEA-COMP:10640"/>
        <dbReference type="ChEBI" id="CHEBI:15377"/>
        <dbReference type="ChEBI" id="CHEBI:15740"/>
        <dbReference type="ChEBI" id="CHEBI:49298"/>
        <dbReference type="ChEBI" id="CHEBI:64731"/>
        <dbReference type="EC" id="3.5.1.88"/>
    </reaction>
</comment>
<comment type="cofactor">
    <cofactor evidence="1">
        <name>Fe(2+)</name>
        <dbReference type="ChEBI" id="CHEBI:29033"/>
    </cofactor>
    <text evidence="1">Binds 1 Fe(2+) ion.</text>
</comment>
<comment type="similarity">
    <text evidence="1">Belongs to the polypeptide deformylase family.</text>
</comment>
<reference key="1">
    <citation type="journal article" date="2006" name="Proc. Natl. Acad. Sci. U.S.A.">
        <title>Genome reduction in Leptospira borgpetersenii reflects limited transmission potential.</title>
        <authorList>
            <person name="Bulach D.M."/>
            <person name="Zuerner R.L."/>
            <person name="Wilson P."/>
            <person name="Seemann T."/>
            <person name="McGrath A."/>
            <person name="Cullen P.A."/>
            <person name="Davis J."/>
            <person name="Johnson M."/>
            <person name="Kuczek E."/>
            <person name="Alt D.P."/>
            <person name="Peterson-Burch B."/>
            <person name="Coppel R.L."/>
            <person name="Rood J.I."/>
            <person name="Davies J.K."/>
            <person name="Adler B."/>
        </authorList>
    </citation>
    <scope>NUCLEOTIDE SEQUENCE [LARGE SCALE GENOMIC DNA]</scope>
    <source>
        <strain>L550</strain>
    </source>
</reference>
<proteinExistence type="inferred from homology"/>
<organism>
    <name type="scientific">Leptospira borgpetersenii serovar Hardjo-bovis (strain L550)</name>
    <dbReference type="NCBI Taxonomy" id="355276"/>
    <lineage>
        <taxon>Bacteria</taxon>
        <taxon>Pseudomonadati</taxon>
        <taxon>Spirochaetota</taxon>
        <taxon>Spirochaetia</taxon>
        <taxon>Leptospirales</taxon>
        <taxon>Leptospiraceae</taxon>
        <taxon>Leptospira</taxon>
    </lineage>
</organism>
<sequence>MSVRKILRMGDSILRQVSIPVTENELQTKEFKKLIRDMFDTMRHAEGVGLAAPQIGILKQIVVVGSEDNERYPDTPNVPERVILNPIITPLTKDTSGFWEGCLSVPGMRGYVERPNKIRMQWMDEKGDRFDETIDGYKAVVYQHECDHLSGILYVDRLKDTKLFGFNDTLDSGRNVLD</sequence>
<gene>
    <name evidence="1" type="primary">def</name>
    <name type="ordered locus">LBL_1460</name>
</gene>
<name>DEF_LEPBL</name>
<evidence type="ECO:0000255" key="1">
    <source>
        <dbReference type="HAMAP-Rule" id="MF_00163"/>
    </source>
</evidence>
<feature type="chain" id="PRO_0000301051" description="Peptide deformylase">
    <location>
        <begin position="1"/>
        <end position="178"/>
    </location>
</feature>
<feature type="active site" evidence="1">
    <location>
        <position position="145"/>
    </location>
</feature>
<feature type="binding site" evidence="1">
    <location>
        <position position="102"/>
    </location>
    <ligand>
        <name>Fe cation</name>
        <dbReference type="ChEBI" id="CHEBI:24875"/>
    </ligand>
</feature>
<feature type="binding site" evidence="1">
    <location>
        <position position="144"/>
    </location>
    <ligand>
        <name>Fe cation</name>
        <dbReference type="ChEBI" id="CHEBI:24875"/>
    </ligand>
</feature>
<feature type="binding site" evidence="1">
    <location>
        <position position="148"/>
    </location>
    <ligand>
        <name>Fe cation</name>
        <dbReference type="ChEBI" id="CHEBI:24875"/>
    </ligand>
</feature>
<accession>Q051Q7</accession>
<dbReference type="EC" id="3.5.1.88" evidence="1"/>
<dbReference type="EMBL" id="CP000348">
    <property type="protein sequence ID" value="ABJ78938.1"/>
    <property type="molecule type" value="Genomic_DNA"/>
</dbReference>
<dbReference type="RefSeq" id="WP_011670138.1">
    <property type="nucleotide sequence ID" value="NC_008508.1"/>
</dbReference>
<dbReference type="SMR" id="Q051Q7"/>
<dbReference type="KEGG" id="lbl:LBL_1460"/>
<dbReference type="PATRIC" id="fig|355276.3.peg.1848"/>
<dbReference type="HOGENOM" id="CLU_061901_5_2_12"/>
<dbReference type="GO" id="GO:0046872">
    <property type="term" value="F:metal ion binding"/>
    <property type="evidence" value="ECO:0007669"/>
    <property type="project" value="UniProtKB-KW"/>
</dbReference>
<dbReference type="GO" id="GO:0042586">
    <property type="term" value="F:peptide deformylase activity"/>
    <property type="evidence" value="ECO:0007669"/>
    <property type="project" value="UniProtKB-UniRule"/>
</dbReference>
<dbReference type="GO" id="GO:0043686">
    <property type="term" value="P:co-translational protein modification"/>
    <property type="evidence" value="ECO:0007669"/>
    <property type="project" value="TreeGrafter"/>
</dbReference>
<dbReference type="GO" id="GO:0006412">
    <property type="term" value="P:translation"/>
    <property type="evidence" value="ECO:0007669"/>
    <property type="project" value="UniProtKB-UniRule"/>
</dbReference>
<dbReference type="CDD" id="cd00487">
    <property type="entry name" value="Pep_deformylase"/>
    <property type="match status" value="1"/>
</dbReference>
<dbReference type="FunFam" id="3.90.45.10:FF:000003">
    <property type="entry name" value="Peptide deformylase"/>
    <property type="match status" value="1"/>
</dbReference>
<dbReference type="Gene3D" id="3.90.45.10">
    <property type="entry name" value="Peptide deformylase"/>
    <property type="match status" value="1"/>
</dbReference>
<dbReference type="HAMAP" id="MF_00163">
    <property type="entry name" value="Pep_deformylase"/>
    <property type="match status" value="1"/>
</dbReference>
<dbReference type="InterPro" id="IPR023635">
    <property type="entry name" value="Peptide_deformylase"/>
</dbReference>
<dbReference type="InterPro" id="IPR036821">
    <property type="entry name" value="Peptide_deformylase_sf"/>
</dbReference>
<dbReference type="NCBIfam" id="TIGR00079">
    <property type="entry name" value="pept_deformyl"/>
    <property type="match status" value="1"/>
</dbReference>
<dbReference type="NCBIfam" id="NF001159">
    <property type="entry name" value="PRK00150.1-3"/>
    <property type="match status" value="1"/>
</dbReference>
<dbReference type="PANTHER" id="PTHR10458">
    <property type="entry name" value="PEPTIDE DEFORMYLASE"/>
    <property type="match status" value="1"/>
</dbReference>
<dbReference type="PANTHER" id="PTHR10458:SF20">
    <property type="entry name" value="PEPTIDE DEFORMYLASE 1"/>
    <property type="match status" value="1"/>
</dbReference>
<dbReference type="Pfam" id="PF01327">
    <property type="entry name" value="Pep_deformylase"/>
    <property type="match status" value="1"/>
</dbReference>
<dbReference type="PIRSF" id="PIRSF004749">
    <property type="entry name" value="Pep_def"/>
    <property type="match status" value="1"/>
</dbReference>
<dbReference type="PRINTS" id="PR01576">
    <property type="entry name" value="PDEFORMYLASE"/>
</dbReference>
<dbReference type="SUPFAM" id="SSF56420">
    <property type="entry name" value="Peptide deformylase"/>
    <property type="match status" value="1"/>
</dbReference>
<protein>
    <recommendedName>
        <fullName evidence="1">Peptide deformylase</fullName>
        <shortName evidence="1">PDF</shortName>
        <ecNumber evidence="1">3.5.1.88</ecNumber>
    </recommendedName>
    <alternativeName>
        <fullName evidence="1">Polypeptide deformylase</fullName>
    </alternativeName>
</protein>